<protein>
    <recommendedName>
        <fullName>Na(+)/H(+) antiporter subunit G1</fullName>
    </recommendedName>
    <alternativeName>
        <fullName>Mnh complex subunit G1</fullName>
    </alternativeName>
</protein>
<sequence length="118" mass="12819">MIKIILISLALIFVIIGALISALAAIGLLRLEDVYSRAHAAGKASTLGAMSLLFGTFLYFIATQGFVNMQLIVAIIFVLITGPLSSHMIMKAAYNIKTPYTKKTKVDEISEDLKDTKL</sequence>
<comment type="function">
    <text evidence="1">Mnh complex is a Na(+)/H(+) antiporter involved in Na(+) excretion.</text>
</comment>
<comment type="subunit">
    <text evidence="1">May form a heterooligomeric complex that consists of seven subunits: mnhA1, mnhB1, mnhC1, mnhD1, mnhE1, mnhF1 and mnhG1.</text>
</comment>
<comment type="subcellular location">
    <subcellularLocation>
        <location evidence="3">Cell membrane</location>
        <topology evidence="3">Multi-pass membrane protein</topology>
    </subcellularLocation>
</comment>
<comment type="similarity">
    <text evidence="3">Belongs to the CPA3 antiporters (TC 2.A.63) subunit G family.</text>
</comment>
<evidence type="ECO:0000250" key="1"/>
<evidence type="ECO:0000255" key="2"/>
<evidence type="ECO:0000305" key="3"/>
<accession>A7X0F5</accession>
<dbReference type="EMBL" id="AP009324">
    <property type="protein sequence ID" value="BAF77824.1"/>
    <property type="molecule type" value="Genomic_DNA"/>
</dbReference>
<dbReference type="RefSeq" id="WP_000590451.1">
    <property type="nucleotide sequence ID" value="NZ_CTYB01000024.1"/>
</dbReference>
<dbReference type="SMR" id="A7X0F5"/>
<dbReference type="GeneID" id="98345267"/>
<dbReference type="KEGG" id="saw:SAHV_0941"/>
<dbReference type="HOGENOM" id="CLU_121334_0_3_9"/>
<dbReference type="GO" id="GO:0005886">
    <property type="term" value="C:plasma membrane"/>
    <property type="evidence" value="ECO:0007669"/>
    <property type="project" value="UniProtKB-SubCell"/>
</dbReference>
<dbReference type="GO" id="GO:0015385">
    <property type="term" value="F:sodium:proton antiporter activity"/>
    <property type="evidence" value="ECO:0007669"/>
    <property type="project" value="TreeGrafter"/>
</dbReference>
<dbReference type="InterPro" id="IPR005133">
    <property type="entry name" value="PhaG_MnhG_YufB"/>
</dbReference>
<dbReference type="NCBIfam" id="TIGR01300">
    <property type="entry name" value="CPA3_mnhG_phaG"/>
    <property type="match status" value="1"/>
</dbReference>
<dbReference type="NCBIfam" id="NF009237">
    <property type="entry name" value="PRK12587.1"/>
    <property type="match status" value="1"/>
</dbReference>
<dbReference type="NCBIfam" id="NF009314">
    <property type="entry name" value="PRK12674.1-2"/>
    <property type="match status" value="1"/>
</dbReference>
<dbReference type="PANTHER" id="PTHR34703">
    <property type="entry name" value="ANTIPORTER SUBUNIT MNHG2-RELATED"/>
    <property type="match status" value="1"/>
</dbReference>
<dbReference type="PANTHER" id="PTHR34703:SF1">
    <property type="entry name" value="ANTIPORTER SUBUNIT MNHG2-RELATED"/>
    <property type="match status" value="1"/>
</dbReference>
<dbReference type="Pfam" id="PF03334">
    <property type="entry name" value="PhaG_MnhG_YufB"/>
    <property type="match status" value="1"/>
</dbReference>
<reference key="1">
    <citation type="journal article" date="2008" name="Antimicrob. Agents Chemother.">
        <title>Mutated response regulator graR is responsible for phenotypic conversion of Staphylococcus aureus from heterogeneous vancomycin-intermediate resistance to vancomycin-intermediate resistance.</title>
        <authorList>
            <person name="Neoh H.-M."/>
            <person name="Cui L."/>
            <person name="Yuzawa H."/>
            <person name="Takeuchi F."/>
            <person name="Matsuo M."/>
            <person name="Hiramatsu K."/>
        </authorList>
    </citation>
    <scope>NUCLEOTIDE SEQUENCE [LARGE SCALE GENOMIC DNA]</scope>
    <source>
        <strain>Mu3 / ATCC 700698</strain>
    </source>
</reference>
<organism>
    <name type="scientific">Staphylococcus aureus (strain Mu3 / ATCC 700698)</name>
    <dbReference type="NCBI Taxonomy" id="418127"/>
    <lineage>
        <taxon>Bacteria</taxon>
        <taxon>Bacillati</taxon>
        <taxon>Bacillota</taxon>
        <taxon>Bacilli</taxon>
        <taxon>Bacillales</taxon>
        <taxon>Staphylococcaceae</taxon>
        <taxon>Staphylococcus</taxon>
    </lineage>
</organism>
<feature type="chain" id="PRO_0000372164" description="Na(+)/H(+) antiporter subunit G1">
    <location>
        <begin position="1"/>
        <end position="118"/>
    </location>
</feature>
<feature type="transmembrane region" description="Helical" evidence="2">
    <location>
        <begin position="4"/>
        <end position="24"/>
    </location>
</feature>
<feature type="transmembrane region" description="Helical" evidence="2">
    <location>
        <begin position="38"/>
        <end position="58"/>
    </location>
</feature>
<feature type="transmembrane region" description="Helical" evidence="2">
    <location>
        <begin position="60"/>
        <end position="80"/>
    </location>
</feature>
<keyword id="KW-0050">Antiport</keyword>
<keyword id="KW-1003">Cell membrane</keyword>
<keyword id="KW-0375">Hydrogen ion transport</keyword>
<keyword id="KW-0406">Ion transport</keyword>
<keyword id="KW-0472">Membrane</keyword>
<keyword id="KW-0915">Sodium</keyword>
<keyword id="KW-0739">Sodium transport</keyword>
<keyword id="KW-0812">Transmembrane</keyword>
<keyword id="KW-1133">Transmembrane helix</keyword>
<keyword id="KW-0813">Transport</keyword>
<name>MNHG1_STAA1</name>
<gene>
    <name type="primary">mnhG1</name>
    <name type="ordered locus">SAHV_0941</name>
</gene>
<proteinExistence type="inferred from homology"/>